<proteinExistence type="inferred from homology"/>
<dbReference type="EC" id="2.1.1.-" evidence="1"/>
<dbReference type="EMBL" id="CP000742">
    <property type="protein sequence ID" value="ABR54222.1"/>
    <property type="molecule type" value="Genomic_DNA"/>
</dbReference>
<dbReference type="RefSeq" id="WP_011972125.1">
    <property type="nucleotide sequence ID" value="NC_009634.1"/>
</dbReference>
<dbReference type="SMR" id="A6UP00"/>
<dbReference type="STRING" id="406327.Mevan_0313"/>
<dbReference type="GeneID" id="5326037"/>
<dbReference type="KEGG" id="mvn:Mevan_0313"/>
<dbReference type="eggNOG" id="arCOG04131">
    <property type="taxonomic scope" value="Archaea"/>
</dbReference>
<dbReference type="HOGENOM" id="CLU_041220_0_2_2"/>
<dbReference type="OrthoDB" id="9883at2157"/>
<dbReference type="Proteomes" id="UP000001107">
    <property type="component" value="Chromosome"/>
</dbReference>
<dbReference type="GO" id="GO:0005737">
    <property type="term" value="C:cytoplasm"/>
    <property type="evidence" value="ECO:0007669"/>
    <property type="project" value="UniProtKB-SubCell"/>
</dbReference>
<dbReference type="GO" id="GO:0003723">
    <property type="term" value="F:RNA binding"/>
    <property type="evidence" value="ECO:0007669"/>
    <property type="project" value="UniProtKB-KW"/>
</dbReference>
<dbReference type="GO" id="GO:0000179">
    <property type="term" value="F:rRNA (adenine-N6,N6-)-dimethyltransferase activity"/>
    <property type="evidence" value="ECO:0007669"/>
    <property type="project" value="InterPro"/>
</dbReference>
<dbReference type="CDD" id="cd02440">
    <property type="entry name" value="AdoMet_MTases"/>
    <property type="match status" value="1"/>
</dbReference>
<dbReference type="FunFam" id="3.40.50.150:FF:000023">
    <property type="entry name" value="Ribosomal RNA small subunit methyltransferase A"/>
    <property type="match status" value="1"/>
</dbReference>
<dbReference type="Gene3D" id="1.10.8.100">
    <property type="entry name" value="Ribosomal RNA adenine dimethylase-like, domain 2"/>
    <property type="match status" value="1"/>
</dbReference>
<dbReference type="Gene3D" id="3.40.50.150">
    <property type="entry name" value="Vaccinia Virus protein VP39"/>
    <property type="match status" value="1"/>
</dbReference>
<dbReference type="HAMAP" id="MF_00607">
    <property type="entry name" value="16SrRNA_methyltr_A"/>
    <property type="match status" value="1"/>
</dbReference>
<dbReference type="InterPro" id="IPR001737">
    <property type="entry name" value="KsgA/Erm"/>
</dbReference>
<dbReference type="InterPro" id="IPR023165">
    <property type="entry name" value="rRNA_Ade_diMease-like_C"/>
</dbReference>
<dbReference type="InterPro" id="IPR020596">
    <property type="entry name" value="rRNA_Ade_Mease_Trfase_CS"/>
</dbReference>
<dbReference type="InterPro" id="IPR020598">
    <property type="entry name" value="rRNA_Ade_methylase_Trfase_N"/>
</dbReference>
<dbReference type="InterPro" id="IPR011530">
    <property type="entry name" value="rRNA_adenine_dimethylase"/>
</dbReference>
<dbReference type="InterPro" id="IPR029063">
    <property type="entry name" value="SAM-dependent_MTases_sf"/>
</dbReference>
<dbReference type="NCBIfam" id="TIGR00755">
    <property type="entry name" value="ksgA"/>
    <property type="match status" value="1"/>
</dbReference>
<dbReference type="PANTHER" id="PTHR11727">
    <property type="entry name" value="DIMETHYLADENOSINE TRANSFERASE"/>
    <property type="match status" value="1"/>
</dbReference>
<dbReference type="PANTHER" id="PTHR11727:SF7">
    <property type="entry name" value="DIMETHYLADENOSINE TRANSFERASE-RELATED"/>
    <property type="match status" value="1"/>
</dbReference>
<dbReference type="Pfam" id="PF00398">
    <property type="entry name" value="RrnaAD"/>
    <property type="match status" value="1"/>
</dbReference>
<dbReference type="SMART" id="SM00650">
    <property type="entry name" value="rADc"/>
    <property type="match status" value="1"/>
</dbReference>
<dbReference type="SUPFAM" id="SSF53335">
    <property type="entry name" value="S-adenosyl-L-methionine-dependent methyltransferases"/>
    <property type="match status" value="1"/>
</dbReference>
<dbReference type="PROSITE" id="PS01131">
    <property type="entry name" value="RRNA_A_DIMETH"/>
    <property type="match status" value="1"/>
</dbReference>
<dbReference type="PROSITE" id="PS51689">
    <property type="entry name" value="SAM_RNA_A_N6_MT"/>
    <property type="match status" value="1"/>
</dbReference>
<name>RSMA_METVS</name>
<feature type="chain" id="PRO_1000056638" description="Probable ribosomal RNA small subunit methyltransferase A">
    <location>
        <begin position="1"/>
        <end position="267"/>
    </location>
</feature>
<feature type="binding site" evidence="1">
    <location>
        <position position="12"/>
    </location>
    <ligand>
        <name>S-adenosyl-L-methionine</name>
        <dbReference type="ChEBI" id="CHEBI:59789"/>
    </ligand>
</feature>
<feature type="binding site" evidence="1">
    <location>
        <position position="37"/>
    </location>
    <ligand>
        <name>S-adenosyl-L-methionine</name>
        <dbReference type="ChEBI" id="CHEBI:59789"/>
    </ligand>
</feature>
<feature type="binding site" evidence="1">
    <location>
        <position position="58"/>
    </location>
    <ligand>
        <name>S-adenosyl-L-methionine</name>
        <dbReference type="ChEBI" id="CHEBI:59789"/>
    </ligand>
</feature>
<feature type="binding site" evidence="1">
    <location>
        <position position="83"/>
    </location>
    <ligand>
        <name>S-adenosyl-L-methionine</name>
        <dbReference type="ChEBI" id="CHEBI:59789"/>
    </ligand>
</feature>
<feature type="binding site" evidence="1">
    <location>
        <position position="100"/>
    </location>
    <ligand>
        <name>S-adenosyl-L-methionine</name>
        <dbReference type="ChEBI" id="CHEBI:59789"/>
    </ligand>
</feature>
<accession>A6UP00</accession>
<evidence type="ECO:0000255" key="1">
    <source>
        <dbReference type="HAMAP-Rule" id="MF_00607"/>
    </source>
</evidence>
<organism>
    <name type="scientific">Methanococcus vannielii (strain ATCC 35089 / DSM 1224 / JCM 13029 / OCM 148 / SB)</name>
    <dbReference type="NCBI Taxonomy" id="406327"/>
    <lineage>
        <taxon>Archaea</taxon>
        <taxon>Methanobacteriati</taxon>
        <taxon>Methanobacteriota</taxon>
        <taxon>Methanomada group</taxon>
        <taxon>Methanococci</taxon>
        <taxon>Methanococcales</taxon>
        <taxon>Methanococcaceae</taxon>
        <taxon>Methanococcus</taxon>
    </lineage>
</organism>
<gene>
    <name evidence="1" type="primary">rsmA</name>
    <name evidence="1" type="synonym">ksgA</name>
    <name type="ordered locus">Mevan_0313</name>
</gene>
<keyword id="KW-0963">Cytoplasm</keyword>
<keyword id="KW-0489">Methyltransferase</keyword>
<keyword id="KW-0694">RNA-binding</keyword>
<keyword id="KW-0698">rRNA processing</keyword>
<keyword id="KW-0949">S-adenosyl-L-methionine</keyword>
<keyword id="KW-0808">Transferase</keyword>
<reference key="1">
    <citation type="submission" date="2007-06" db="EMBL/GenBank/DDBJ databases">
        <title>Complete sequence of Methanococcus vannielii SB.</title>
        <authorList>
            <consortium name="US DOE Joint Genome Institute"/>
            <person name="Copeland A."/>
            <person name="Lucas S."/>
            <person name="Lapidus A."/>
            <person name="Barry K."/>
            <person name="Glavina del Rio T."/>
            <person name="Dalin E."/>
            <person name="Tice H."/>
            <person name="Pitluck S."/>
            <person name="Chain P."/>
            <person name="Malfatti S."/>
            <person name="Shin M."/>
            <person name="Vergez L."/>
            <person name="Schmutz J."/>
            <person name="Larimer F."/>
            <person name="Land M."/>
            <person name="Hauser L."/>
            <person name="Kyrpides N."/>
            <person name="Anderson I."/>
            <person name="Sieprawska-Lupa M."/>
            <person name="Whitman W.B."/>
            <person name="Richardson P."/>
        </authorList>
    </citation>
    <scope>NUCLEOTIDE SEQUENCE [LARGE SCALE GENOMIC DNA]</scope>
    <source>
        <strain>ATCC 35089 / DSM 1224 / JCM 13029 / OCM 148 / SB</strain>
    </source>
</reference>
<sequence>MKQSKKLGQCFLKDKNFVKKAIKSADITENDIVLEVGLGEGALTKELAKLAKFVYVIELDMRLEPFANQIMSEFKNVKVIWNDALKVDLKELGFNKIVANLPYQISSPITFKFLENDFDVAVLMYQYEFAKRMIGKPDTDEYSRLSVSIQYNSDVEFICKVPPTAFSPKPDVNSAIVKLTKREPLFHIENEEFFRNVLNAIFQHRNRTVKRALIDSSHEMNIERERLKEILENIKLDFDFSERVFKLAPEKIGELSNILYLNIISKK</sequence>
<comment type="function">
    <text evidence="1">Specifically dimethylates two adjacent adenosines in the loop of a conserved hairpin near the 3'-end of 16S rRNA in the 30S particle. May play a critical role in biogenesis of 30S subunits.</text>
</comment>
<comment type="subcellular location">
    <subcellularLocation>
        <location evidence="1">Cytoplasm</location>
    </subcellularLocation>
</comment>
<comment type="similarity">
    <text evidence="1">Belongs to the class I-like SAM-binding methyltransferase superfamily. rRNA adenine N(6)-methyltransferase family. RsmA subfamily.</text>
</comment>
<protein>
    <recommendedName>
        <fullName evidence="1">Probable ribosomal RNA small subunit methyltransferase A</fullName>
        <ecNumber evidence="1">2.1.1.-</ecNumber>
    </recommendedName>
    <alternativeName>
        <fullName evidence="1">16S rRNA dimethyladenosine transferase</fullName>
    </alternativeName>
    <alternativeName>
        <fullName evidence="1">16S rRNA dimethylase</fullName>
    </alternativeName>
    <alternativeName>
        <fullName evidence="1">S-adenosylmethionine-6-N',N'-adenosyl(rRNA) dimethyltransferase</fullName>
    </alternativeName>
</protein>